<dbReference type="EMBL" id="AL132980">
    <property type="protein sequence ID" value="CAB62640.1"/>
    <property type="status" value="ALT_SEQ"/>
    <property type="molecule type" value="Genomic_DNA"/>
</dbReference>
<dbReference type="EMBL" id="CP002686">
    <property type="protein sequence ID" value="AEE78760.1"/>
    <property type="molecule type" value="Genomic_DNA"/>
</dbReference>
<dbReference type="EMBL" id="AY037185">
    <property type="protein sequence ID" value="AAK59770.1"/>
    <property type="molecule type" value="mRNA"/>
</dbReference>
<dbReference type="EMBL" id="BT000512">
    <property type="protein sequence ID" value="AAN18081.1"/>
    <property type="molecule type" value="mRNA"/>
</dbReference>
<dbReference type="PIR" id="T45749">
    <property type="entry name" value="T45749"/>
</dbReference>
<dbReference type="RefSeq" id="NP_566947.1">
    <property type="nucleotide sequence ID" value="NM_114977.3"/>
</dbReference>
<dbReference type="BioGRID" id="9599">
    <property type="interactions" value="17"/>
</dbReference>
<dbReference type="IntAct" id="Q94C33">
    <property type="interactions" value="27"/>
</dbReference>
<dbReference type="STRING" id="3702.Q94C33"/>
<dbReference type="PaxDb" id="3702-AT3G51180.1"/>
<dbReference type="EnsemblPlants" id="AT3G51180.1">
    <property type="protein sequence ID" value="AT3G51180.1"/>
    <property type="gene ID" value="AT3G51180"/>
</dbReference>
<dbReference type="GeneID" id="824281"/>
<dbReference type="Gramene" id="AT3G51180.1">
    <property type="protein sequence ID" value="AT3G51180.1"/>
    <property type="gene ID" value="AT3G51180"/>
</dbReference>
<dbReference type="KEGG" id="ath:AT3G51180"/>
<dbReference type="Araport" id="AT3G51180"/>
<dbReference type="TAIR" id="AT3G51180"/>
<dbReference type="eggNOG" id="ENOG502QUGU">
    <property type="taxonomic scope" value="Eukaryota"/>
</dbReference>
<dbReference type="HOGENOM" id="CLU_023896_0_0_1"/>
<dbReference type="InParanoid" id="Q94C33"/>
<dbReference type="OMA" id="CIYYGTA"/>
<dbReference type="PhylomeDB" id="Q94C33"/>
<dbReference type="PRO" id="PR:Q94C33"/>
<dbReference type="Proteomes" id="UP000006548">
    <property type="component" value="Chromosome 3"/>
</dbReference>
<dbReference type="ExpressionAtlas" id="Q94C33">
    <property type="expression patterns" value="baseline and differential"/>
</dbReference>
<dbReference type="GO" id="GO:0003677">
    <property type="term" value="F:DNA binding"/>
    <property type="evidence" value="ECO:0007669"/>
    <property type="project" value="UniProtKB-KW"/>
</dbReference>
<dbReference type="GO" id="GO:0008270">
    <property type="term" value="F:zinc ion binding"/>
    <property type="evidence" value="ECO:0007669"/>
    <property type="project" value="UniProtKB-KW"/>
</dbReference>
<dbReference type="InterPro" id="IPR000571">
    <property type="entry name" value="Znf_CCCH"/>
</dbReference>
<dbReference type="PANTHER" id="PTHR33400:SF12">
    <property type="entry name" value="ZINC FINGER CCCH DOMAIN-CONTAINING PROTEIN 45-RELATED"/>
    <property type="match status" value="1"/>
</dbReference>
<dbReference type="PANTHER" id="PTHR33400">
    <property type="entry name" value="ZINC FINGER CCCH DOMAIN-CONTAINING PROTEIN 6-RELATED"/>
    <property type="match status" value="1"/>
</dbReference>
<dbReference type="PROSITE" id="PS50103">
    <property type="entry name" value="ZF_C3H1"/>
    <property type="match status" value="1"/>
</dbReference>
<sequence>MNNMKRSKKPRVSWPPGPKLCQVKVFRTEDSPANVASQPQRHSYPSRKPRGPDLPPGFEGNHYAVKPNVSNIPRIKWKRPPPKFSVNDTWLVGCGGGSSEWQNENLRISKVLEAIYPHRSAIPSRPSVSPAVEAECFDDSKTPAIRLTPIEDESESSSEESSNSKVESGVTANKQGQLETKPLCSTQEQVSGLTGLAPDLSLAASAALTALMKTKEQGSLVDTELLIKFLSDPKLIKNLITDTSGKSSETKNQPIVTNINSATRPVPQPVSAVTASPMARKPQPVIIPQEHSVAVSRSFTNPERRVSPPKPVNGSISPPKPITGKPSSIPMPVHFHVGIAKEQPQPARFPSSSLPMNLNFHRPPNVFSEPKVIVNPQPQHQPYSAFRTSEMNYVQSSIGLGRGPQTGFNSYPMNFSRADAIGSAKPVVQPMKGLDYFKNLIREHGTDNHETNQYHSQTGIFNGRIDNNNKIHQQCIYFGTANGCNMGDSCTYVHDRYRPNFEAAAPRAKRMKFGRYERNGF</sequence>
<organism>
    <name type="scientific">Arabidopsis thaliana</name>
    <name type="common">Mouse-ear cress</name>
    <dbReference type="NCBI Taxonomy" id="3702"/>
    <lineage>
        <taxon>Eukaryota</taxon>
        <taxon>Viridiplantae</taxon>
        <taxon>Streptophyta</taxon>
        <taxon>Embryophyta</taxon>
        <taxon>Tracheophyta</taxon>
        <taxon>Spermatophyta</taxon>
        <taxon>Magnoliopsida</taxon>
        <taxon>eudicotyledons</taxon>
        <taxon>Gunneridae</taxon>
        <taxon>Pentapetalae</taxon>
        <taxon>rosids</taxon>
        <taxon>malvids</taxon>
        <taxon>Brassicales</taxon>
        <taxon>Brassicaceae</taxon>
        <taxon>Camelineae</taxon>
        <taxon>Arabidopsis</taxon>
    </lineage>
</organism>
<gene>
    <name type="ordered locus">At3g51180</name>
    <name type="ORF">F24M12.220</name>
</gene>
<reference key="1">
    <citation type="journal article" date="2000" name="Nature">
        <title>Sequence and analysis of chromosome 3 of the plant Arabidopsis thaliana.</title>
        <authorList>
            <person name="Salanoubat M."/>
            <person name="Lemcke K."/>
            <person name="Rieger M."/>
            <person name="Ansorge W."/>
            <person name="Unseld M."/>
            <person name="Fartmann B."/>
            <person name="Valle G."/>
            <person name="Bloecker H."/>
            <person name="Perez-Alonso M."/>
            <person name="Obermaier B."/>
            <person name="Delseny M."/>
            <person name="Boutry M."/>
            <person name="Grivell L.A."/>
            <person name="Mache R."/>
            <person name="Puigdomenech P."/>
            <person name="De Simone V."/>
            <person name="Choisne N."/>
            <person name="Artiguenave F."/>
            <person name="Robert C."/>
            <person name="Brottier P."/>
            <person name="Wincker P."/>
            <person name="Cattolico L."/>
            <person name="Weissenbach J."/>
            <person name="Saurin W."/>
            <person name="Quetier F."/>
            <person name="Schaefer M."/>
            <person name="Mueller-Auer S."/>
            <person name="Gabel C."/>
            <person name="Fuchs M."/>
            <person name="Benes V."/>
            <person name="Wurmbach E."/>
            <person name="Drzonek H."/>
            <person name="Erfle H."/>
            <person name="Jordan N."/>
            <person name="Bangert S."/>
            <person name="Wiedelmann R."/>
            <person name="Kranz H."/>
            <person name="Voss H."/>
            <person name="Holland R."/>
            <person name="Brandt P."/>
            <person name="Nyakatura G."/>
            <person name="Vezzi A."/>
            <person name="D'Angelo M."/>
            <person name="Pallavicini A."/>
            <person name="Toppo S."/>
            <person name="Simionati B."/>
            <person name="Conrad A."/>
            <person name="Hornischer K."/>
            <person name="Kauer G."/>
            <person name="Loehnert T.-H."/>
            <person name="Nordsiek G."/>
            <person name="Reichelt J."/>
            <person name="Scharfe M."/>
            <person name="Schoen O."/>
            <person name="Bargues M."/>
            <person name="Terol J."/>
            <person name="Climent J."/>
            <person name="Navarro P."/>
            <person name="Collado C."/>
            <person name="Perez-Perez A."/>
            <person name="Ottenwaelder B."/>
            <person name="Duchemin D."/>
            <person name="Cooke R."/>
            <person name="Laudie M."/>
            <person name="Berger-Llauro C."/>
            <person name="Purnelle B."/>
            <person name="Masuy D."/>
            <person name="de Haan M."/>
            <person name="Maarse A.C."/>
            <person name="Alcaraz J.-P."/>
            <person name="Cottet A."/>
            <person name="Casacuberta E."/>
            <person name="Monfort A."/>
            <person name="Argiriou A."/>
            <person name="Flores M."/>
            <person name="Liguori R."/>
            <person name="Vitale D."/>
            <person name="Mannhaupt G."/>
            <person name="Haase D."/>
            <person name="Schoof H."/>
            <person name="Rudd S."/>
            <person name="Zaccaria P."/>
            <person name="Mewes H.-W."/>
            <person name="Mayer K.F.X."/>
            <person name="Kaul S."/>
            <person name="Town C.D."/>
            <person name="Koo H.L."/>
            <person name="Tallon L.J."/>
            <person name="Jenkins J."/>
            <person name="Rooney T."/>
            <person name="Rizzo M."/>
            <person name="Walts A."/>
            <person name="Utterback T."/>
            <person name="Fujii C.Y."/>
            <person name="Shea T.P."/>
            <person name="Creasy T.H."/>
            <person name="Haas B."/>
            <person name="Maiti R."/>
            <person name="Wu D."/>
            <person name="Peterson J."/>
            <person name="Van Aken S."/>
            <person name="Pai G."/>
            <person name="Militscher J."/>
            <person name="Sellers P."/>
            <person name="Gill J.E."/>
            <person name="Feldblyum T.V."/>
            <person name="Preuss D."/>
            <person name="Lin X."/>
            <person name="Nierman W.C."/>
            <person name="Salzberg S.L."/>
            <person name="White O."/>
            <person name="Venter J.C."/>
            <person name="Fraser C.M."/>
            <person name="Kaneko T."/>
            <person name="Nakamura Y."/>
            <person name="Sato S."/>
            <person name="Kato T."/>
            <person name="Asamizu E."/>
            <person name="Sasamoto S."/>
            <person name="Kimura T."/>
            <person name="Idesawa K."/>
            <person name="Kawashima K."/>
            <person name="Kishida Y."/>
            <person name="Kiyokawa C."/>
            <person name="Kohara M."/>
            <person name="Matsumoto M."/>
            <person name="Matsuno A."/>
            <person name="Muraki A."/>
            <person name="Nakayama S."/>
            <person name="Nakazaki N."/>
            <person name="Shinpo S."/>
            <person name="Takeuchi C."/>
            <person name="Wada T."/>
            <person name="Watanabe A."/>
            <person name="Yamada M."/>
            <person name="Yasuda M."/>
            <person name="Tabata S."/>
        </authorList>
    </citation>
    <scope>NUCLEOTIDE SEQUENCE [LARGE SCALE GENOMIC DNA]</scope>
    <source>
        <strain>cv. Columbia</strain>
    </source>
</reference>
<reference key="2">
    <citation type="journal article" date="2017" name="Plant J.">
        <title>Araport11: a complete reannotation of the Arabidopsis thaliana reference genome.</title>
        <authorList>
            <person name="Cheng C.Y."/>
            <person name="Krishnakumar V."/>
            <person name="Chan A.P."/>
            <person name="Thibaud-Nissen F."/>
            <person name="Schobel S."/>
            <person name="Town C.D."/>
        </authorList>
    </citation>
    <scope>GENOME REANNOTATION</scope>
    <source>
        <strain>cv. Columbia</strain>
    </source>
</reference>
<reference key="3">
    <citation type="journal article" date="2003" name="Science">
        <title>Empirical analysis of transcriptional activity in the Arabidopsis genome.</title>
        <authorList>
            <person name="Yamada K."/>
            <person name="Lim J."/>
            <person name="Dale J.M."/>
            <person name="Chen H."/>
            <person name="Shinn P."/>
            <person name="Palm C.J."/>
            <person name="Southwick A.M."/>
            <person name="Wu H.C."/>
            <person name="Kim C.J."/>
            <person name="Nguyen M."/>
            <person name="Pham P.K."/>
            <person name="Cheuk R.F."/>
            <person name="Karlin-Newmann G."/>
            <person name="Liu S.X."/>
            <person name="Lam B."/>
            <person name="Sakano H."/>
            <person name="Wu T."/>
            <person name="Yu G."/>
            <person name="Miranda M."/>
            <person name="Quach H.L."/>
            <person name="Tripp M."/>
            <person name="Chang C.H."/>
            <person name="Lee J.M."/>
            <person name="Toriumi M.J."/>
            <person name="Chan M.M."/>
            <person name="Tang C.C."/>
            <person name="Onodera C.S."/>
            <person name="Deng J.M."/>
            <person name="Akiyama K."/>
            <person name="Ansari Y."/>
            <person name="Arakawa T."/>
            <person name="Banh J."/>
            <person name="Banno F."/>
            <person name="Bowser L."/>
            <person name="Brooks S.Y."/>
            <person name="Carninci P."/>
            <person name="Chao Q."/>
            <person name="Choy N."/>
            <person name="Enju A."/>
            <person name="Goldsmith A.D."/>
            <person name="Gurjal M."/>
            <person name="Hansen N.F."/>
            <person name="Hayashizaki Y."/>
            <person name="Johnson-Hopson C."/>
            <person name="Hsuan V.W."/>
            <person name="Iida K."/>
            <person name="Karnes M."/>
            <person name="Khan S."/>
            <person name="Koesema E."/>
            <person name="Ishida J."/>
            <person name="Jiang P.X."/>
            <person name="Jones T."/>
            <person name="Kawai J."/>
            <person name="Kamiya A."/>
            <person name="Meyers C."/>
            <person name="Nakajima M."/>
            <person name="Narusaka M."/>
            <person name="Seki M."/>
            <person name="Sakurai T."/>
            <person name="Satou M."/>
            <person name="Tamse R."/>
            <person name="Vaysberg M."/>
            <person name="Wallender E.K."/>
            <person name="Wong C."/>
            <person name="Yamamura Y."/>
            <person name="Yuan S."/>
            <person name="Shinozaki K."/>
            <person name="Davis R.W."/>
            <person name="Theologis A."/>
            <person name="Ecker J.R."/>
        </authorList>
    </citation>
    <scope>NUCLEOTIDE SEQUENCE [LARGE SCALE MRNA]</scope>
    <source>
        <strain>cv. Columbia</strain>
    </source>
</reference>
<reference key="4">
    <citation type="journal article" date="2008" name="BMC Genomics">
        <title>Genome-wide analysis of CCCH zinc finger family in Arabidopsis and rice.</title>
        <authorList>
            <person name="Wang D."/>
            <person name="Guo Y."/>
            <person name="Wu C."/>
            <person name="Yang G."/>
            <person name="Li Y."/>
            <person name="Zheng C."/>
        </authorList>
    </citation>
    <scope>NOMENCLATURE</scope>
</reference>
<feature type="chain" id="PRO_0000371999" description="Zinc finger CCCH domain-containing protein 45">
    <location>
        <begin position="1"/>
        <end position="521"/>
    </location>
</feature>
<feature type="zinc finger region" description="C3H1-type" evidence="1">
    <location>
        <begin position="469"/>
        <end position="497"/>
    </location>
</feature>
<feature type="region of interest" description="Disordered" evidence="2">
    <location>
        <begin position="28"/>
        <end position="60"/>
    </location>
</feature>
<feature type="region of interest" description="Disordered" evidence="2">
    <location>
        <begin position="142"/>
        <end position="185"/>
    </location>
</feature>
<feature type="region of interest" description="Disordered" evidence="2">
    <location>
        <begin position="296"/>
        <end position="319"/>
    </location>
</feature>
<feature type="compositionally biased region" description="Polar residues" evidence="2">
    <location>
        <begin position="34"/>
        <end position="43"/>
    </location>
</feature>
<feature type="compositionally biased region" description="Low complexity" evidence="2">
    <location>
        <begin position="159"/>
        <end position="168"/>
    </location>
</feature>
<feature type="compositionally biased region" description="Polar residues" evidence="2">
    <location>
        <begin position="170"/>
        <end position="185"/>
    </location>
</feature>
<proteinExistence type="evidence at protein level"/>
<name>C3H45_ARATH</name>
<accession>Q94C33</accession>
<accession>Q9SD28</accession>
<evidence type="ECO:0000255" key="1">
    <source>
        <dbReference type="PROSITE-ProRule" id="PRU00723"/>
    </source>
</evidence>
<evidence type="ECO:0000256" key="2">
    <source>
        <dbReference type="SAM" id="MobiDB-lite"/>
    </source>
</evidence>
<evidence type="ECO:0000305" key="3"/>
<comment type="interaction">
    <interactant intactId="EBI-4438678">
        <id>Q94C33</id>
    </interactant>
    <interactant intactId="EBI-1803261">
        <id>Q8S307</id>
        <label>BZR1</label>
    </interactant>
    <organismsDiffer>false</organismsDiffer>
    <experiments>3</experiments>
</comment>
<comment type="interaction">
    <interactant intactId="EBI-4438678">
        <id>Q94C33</id>
    </interactant>
    <interactant intactId="EBI-2000137">
        <id>Q9MAI5</id>
        <label>ERF8</label>
    </interactant>
    <organismsDiffer>false</organismsDiffer>
    <experiments>3</experiments>
</comment>
<comment type="sequence caution" evidence="3">
    <conflict type="erroneous gene model prediction">
        <sequence resource="EMBL-CDS" id="CAB62640"/>
    </conflict>
</comment>
<protein>
    <recommendedName>
        <fullName>Zinc finger CCCH domain-containing protein 45</fullName>
        <shortName>AtC3H45</shortName>
    </recommendedName>
</protein>
<keyword id="KW-0238">DNA-binding</keyword>
<keyword id="KW-0479">Metal-binding</keyword>
<keyword id="KW-1185">Reference proteome</keyword>
<keyword id="KW-0862">Zinc</keyword>
<keyword id="KW-0863">Zinc-finger</keyword>